<accession>O33321</accession>
<accession>F2GPE1</accession>
<accession>I6XFA3</accession>
<proteinExistence type="evidence at protein level"/>
<organism>
    <name type="scientific">Mycobacterium tuberculosis (strain ATCC 25618 / H37Rv)</name>
    <dbReference type="NCBI Taxonomy" id="83332"/>
    <lineage>
        <taxon>Bacteria</taxon>
        <taxon>Bacillati</taxon>
        <taxon>Actinomycetota</taxon>
        <taxon>Actinomycetes</taxon>
        <taxon>Mycobacteriales</taxon>
        <taxon>Mycobacteriaceae</taxon>
        <taxon>Mycobacterium</taxon>
        <taxon>Mycobacterium tuberculosis complex</taxon>
    </lineage>
</organism>
<name>ALDR_MYCTU</name>
<feature type="chain" id="PRO_0000461823" description="HTH-type transcriptional regulator AldR">
    <location>
        <begin position="1"/>
        <end position="179"/>
    </location>
</feature>
<feature type="domain" description="HTH asnC-type" evidence="1">
    <location>
        <begin position="32"/>
        <end position="93"/>
    </location>
</feature>
<feature type="DNA-binding region" description="H-T-H motif" evidence="1">
    <location>
        <begin position="51"/>
        <end position="70"/>
    </location>
</feature>
<feature type="mutagenesis site" description="Forms a DNA complex that cannot be inhibited by adding amino acids or other inhibitors." evidence="4">
    <original>G</original>
    <variation>T</variation>
    <location>
        <position position="131"/>
    </location>
</feature>
<feature type="helix" evidence="11">
    <location>
        <begin position="34"/>
        <end position="45"/>
    </location>
</feature>
<feature type="helix" evidence="11">
    <location>
        <begin position="51"/>
        <end position="58"/>
    </location>
</feature>
<feature type="helix" evidence="11">
    <location>
        <begin position="62"/>
        <end position="74"/>
    </location>
</feature>
<feature type="strand" evidence="11">
    <location>
        <begin position="82"/>
        <end position="85"/>
    </location>
</feature>
<feature type="turn" evidence="11">
    <location>
        <begin position="89"/>
        <end position="91"/>
    </location>
</feature>
<feature type="strand" evidence="11">
    <location>
        <begin position="94"/>
        <end position="101"/>
    </location>
</feature>
<feature type="helix" evidence="11">
    <location>
        <begin position="106"/>
        <end position="109"/>
    </location>
</feature>
<feature type="helix" evidence="11">
    <location>
        <begin position="110"/>
        <end position="118"/>
    </location>
</feature>
<feature type="strand" evidence="11">
    <location>
        <begin position="120"/>
        <end position="143"/>
    </location>
</feature>
<feature type="helix" evidence="11">
    <location>
        <begin position="144"/>
        <end position="154"/>
    </location>
</feature>
<feature type="turn" evidence="11">
    <location>
        <begin position="155"/>
        <end position="157"/>
    </location>
</feature>
<feature type="strand" evidence="11">
    <location>
        <begin position="162"/>
        <end position="173"/>
    </location>
</feature>
<protein>
    <recommendedName>
        <fullName evidence="7">HTH-type transcriptional regulator AldR</fullName>
    </recommendedName>
    <alternativeName>
        <fullName evidence="5">Feast/famine regulatory protein Rv2779c</fullName>
    </alternativeName>
</protein>
<comment type="function">
    <text evidence="3 4 8">Transcriptional regulator that might play a role under hypoxic conditions (Probable). Regulates the expression of ald, which encodes L-alanine dehydrogenase (PubMed:26195594, PubMed:27006398). Serves as both an activator for ald expression in the presence of L-alanine and a repressor in the absence of L-alanine (PubMed:26195594). Acts by binding directly to the upstream region of the ald gene (PubMed:27006398). Four AldR-binding sites (O2, O1, O4 and O3) were identified upstream of the ald gene (PubMed:26195594). O2, O1 and O4 are required for the induction of ald expression by alanine, while O3 is directly involved in the repression of ald expression, by occluding the access of RNA polymerase to the ald promoter (PubMed:26195594). In addition to O3, both O1 and O4 are also necessary for full repression of ald expression in the absence of alanine (PubMed:26195594).</text>
</comment>
<comment type="activity regulation">
    <text evidence="4">The DNA-binding activity of AldR is modulated by interaction of AldR with various amino acids (PubMed:27006398). Alanine, tryptophan, tyrosine and aspartate completely abolish the DNA binding ability of AldR (PubMed:27006398). On the other hand, glutamate and asparagine reduce AldR binding to DNA but do not completely abolish it (PubMed:27006398). Binding of amino acids can lead to structural modifications and changes in oligomeric association (PubMed:27006398). Activity is also inhibited by 3 small molecule inhibitors, tetrahydroquinoline carbonitrile derivative (S010-0261), levothyroxine and liothyronine, which can disrupt the AldR-DNA complex (PubMed:27006398).</text>
</comment>
<comment type="subunit">
    <text evidence="2 4">Homooctamer (PubMed:24419627, PubMed:27006398). Homotetramer (PubMed:24419627). Tetramer of dimers (PubMed:27006398). The N-terminal DNA-binding domains are swapped, forming a dimer, and four dimers are assembled into an octamer through crystal symmetry (PubMed:27006398).</text>
</comment>
<comment type="domain">
    <text evidence="4">Contains an N-terminal DNA-binding domain, followed by a rather long linker and a C-terminal effector-binding domain, which is also involved in oligomeric interactions.</text>
</comment>
<evidence type="ECO:0000255" key="1">
    <source>
        <dbReference type="PROSITE-ProRule" id="PRU00319"/>
    </source>
</evidence>
<evidence type="ECO:0000269" key="2">
    <source>
    </source>
</evidence>
<evidence type="ECO:0000269" key="3">
    <source>
    </source>
</evidence>
<evidence type="ECO:0000269" key="4">
    <source>
    </source>
</evidence>
<evidence type="ECO:0000303" key="5">
    <source>
    </source>
</evidence>
<evidence type="ECO:0000303" key="6">
    <source>
    </source>
</evidence>
<evidence type="ECO:0000305" key="7"/>
<evidence type="ECO:0000305" key="8">
    <source>
    </source>
</evidence>
<evidence type="ECO:0000312" key="9">
    <source>
        <dbReference type="EMBL" id="CCP45578.1"/>
    </source>
</evidence>
<evidence type="ECO:0007744" key="10">
    <source>
        <dbReference type="PDB" id="4PCQ"/>
    </source>
</evidence>
<evidence type="ECO:0007829" key="11">
    <source>
        <dbReference type="PDB" id="4PCQ"/>
    </source>
</evidence>
<sequence>MIILFRGHMRDNSTEHKTRRAASSKDVRPAELDEVDRRILSLLHGDARMPNNALADTVGIAPSTCHGRVRRLVDLGVIRGFYTDIDPVAVGLPLQAMISVNLQSSARGKIRSFIQQIRRKRQVMDVYFLAGADDFILHVAARDTEDLRSFVVENLNADADVAGTQTSLIFEHLRGAAPI</sequence>
<dbReference type="EMBL" id="AL123456">
    <property type="protein sequence ID" value="CCP45578.1"/>
    <property type="molecule type" value="Genomic_DNA"/>
</dbReference>
<dbReference type="RefSeq" id="NP_217295.2">
    <property type="nucleotide sequence ID" value="NC_000962.3"/>
</dbReference>
<dbReference type="RefSeq" id="WP_003899476.1">
    <property type="nucleotide sequence ID" value="NC_000962.3"/>
</dbReference>
<dbReference type="PDB" id="4PCQ">
    <property type="method" value="X-ray"/>
    <property type="resolution" value="2.95 A"/>
    <property type="chains" value="A/B/C/D=1-179"/>
</dbReference>
<dbReference type="PDBsum" id="4PCQ"/>
<dbReference type="SMR" id="O33321"/>
<dbReference type="STRING" id="83332.Rv2779c"/>
<dbReference type="PaxDb" id="83332-Rv2779c"/>
<dbReference type="DNASU" id="888479"/>
<dbReference type="GeneID" id="888479"/>
<dbReference type="KEGG" id="mtu:Rv2779c"/>
<dbReference type="KEGG" id="mtv:RVBD_2779c"/>
<dbReference type="PATRIC" id="fig|83332.111.peg.3092"/>
<dbReference type="TubercuList" id="Rv2779c"/>
<dbReference type="eggNOG" id="COG1522">
    <property type="taxonomic scope" value="Bacteria"/>
</dbReference>
<dbReference type="InParanoid" id="O33321"/>
<dbReference type="OrthoDB" id="4411089at2"/>
<dbReference type="PhylomeDB" id="O33321"/>
<dbReference type="Reactome" id="R-HSA-9637628">
    <property type="pathway name" value="Modulation by Mtb of host immune system"/>
</dbReference>
<dbReference type="EvolutionaryTrace" id="O33321"/>
<dbReference type="Proteomes" id="UP000001584">
    <property type="component" value="Chromosome"/>
</dbReference>
<dbReference type="GO" id="GO:0005829">
    <property type="term" value="C:cytosol"/>
    <property type="evidence" value="ECO:0000318"/>
    <property type="project" value="GO_Central"/>
</dbReference>
<dbReference type="GO" id="GO:0043565">
    <property type="term" value="F:sequence-specific DNA binding"/>
    <property type="evidence" value="ECO:0000318"/>
    <property type="project" value="GO_Central"/>
</dbReference>
<dbReference type="GO" id="GO:0043200">
    <property type="term" value="P:response to amino acid"/>
    <property type="evidence" value="ECO:0000318"/>
    <property type="project" value="GO_Central"/>
</dbReference>
<dbReference type="CDD" id="cd00090">
    <property type="entry name" value="HTH_ARSR"/>
    <property type="match status" value="1"/>
</dbReference>
<dbReference type="FunFam" id="1.10.10.10:FF:000408">
    <property type="entry name" value="AsnC family transcriptional regulator"/>
    <property type="match status" value="1"/>
</dbReference>
<dbReference type="FunFam" id="3.30.70.920:FF:000020">
    <property type="entry name" value="AsnC family transcriptional regulator"/>
    <property type="match status" value="1"/>
</dbReference>
<dbReference type="Gene3D" id="3.30.70.920">
    <property type="match status" value="1"/>
</dbReference>
<dbReference type="Gene3D" id="1.10.10.10">
    <property type="entry name" value="Winged helix-like DNA-binding domain superfamily/Winged helix DNA-binding domain"/>
    <property type="match status" value="1"/>
</dbReference>
<dbReference type="InterPro" id="IPR011991">
    <property type="entry name" value="ArsR-like_HTH"/>
</dbReference>
<dbReference type="InterPro" id="IPR000485">
    <property type="entry name" value="AsnC-type_HTH_dom"/>
</dbReference>
<dbReference type="InterPro" id="IPR011008">
    <property type="entry name" value="Dimeric_a/b-barrel"/>
</dbReference>
<dbReference type="InterPro" id="IPR019888">
    <property type="entry name" value="Tscrpt_reg_AsnC-like"/>
</dbReference>
<dbReference type="InterPro" id="IPR019887">
    <property type="entry name" value="Tscrpt_reg_AsnC/Lrp_C"/>
</dbReference>
<dbReference type="InterPro" id="IPR036388">
    <property type="entry name" value="WH-like_DNA-bd_sf"/>
</dbReference>
<dbReference type="InterPro" id="IPR036390">
    <property type="entry name" value="WH_DNA-bd_sf"/>
</dbReference>
<dbReference type="PANTHER" id="PTHR30154">
    <property type="entry name" value="LEUCINE-RESPONSIVE REGULATORY PROTEIN"/>
    <property type="match status" value="1"/>
</dbReference>
<dbReference type="PANTHER" id="PTHR30154:SF54">
    <property type="entry name" value="POSSIBLE TRANSCRIPTIONAL REGULATORY PROTEIN (PROBABLY LRP_ASNC-FAMILY)"/>
    <property type="match status" value="1"/>
</dbReference>
<dbReference type="Pfam" id="PF01037">
    <property type="entry name" value="AsnC_trans_reg"/>
    <property type="match status" value="1"/>
</dbReference>
<dbReference type="Pfam" id="PF13412">
    <property type="entry name" value="HTH_24"/>
    <property type="match status" value="1"/>
</dbReference>
<dbReference type="PRINTS" id="PR00033">
    <property type="entry name" value="HTHASNC"/>
</dbReference>
<dbReference type="SMART" id="SM00344">
    <property type="entry name" value="HTH_ASNC"/>
    <property type="match status" value="1"/>
</dbReference>
<dbReference type="SUPFAM" id="SSF54909">
    <property type="entry name" value="Dimeric alpha+beta barrel"/>
    <property type="match status" value="1"/>
</dbReference>
<dbReference type="SUPFAM" id="SSF46785">
    <property type="entry name" value="Winged helix' DNA-binding domain"/>
    <property type="match status" value="1"/>
</dbReference>
<dbReference type="PROSITE" id="PS50956">
    <property type="entry name" value="HTH_ASNC_2"/>
    <property type="match status" value="1"/>
</dbReference>
<reference key="1">
    <citation type="journal article" date="1998" name="Nature">
        <title>Deciphering the biology of Mycobacterium tuberculosis from the complete genome sequence.</title>
        <authorList>
            <person name="Cole S.T."/>
            <person name="Brosch R."/>
            <person name="Parkhill J."/>
            <person name="Garnier T."/>
            <person name="Churcher C.M."/>
            <person name="Harris D.E."/>
            <person name="Gordon S.V."/>
            <person name="Eiglmeier K."/>
            <person name="Gas S."/>
            <person name="Barry C.E. III"/>
            <person name="Tekaia F."/>
            <person name="Badcock K."/>
            <person name="Basham D."/>
            <person name="Brown D."/>
            <person name="Chillingworth T."/>
            <person name="Connor R."/>
            <person name="Davies R.M."/>
            <person name="Devlin K."/>
            <person name="Feltwell T."/>
            <person name="Gentles S."/>
            <person name="Hamlin N."/>
            <person name="Holroyd S."/>
            <person name="Hornsby T."/>
            <person name="Jagels K."/>
            <person name="Krogh A."/>
            <person name="McLean J."/>
            <person name="Moule S."/>
            <person name="Murphy L.D."/>
            <person name="Oliver S."/>
            <person name="Osborne J."/>
            <person name="Quail M.A."/>
            <person name="Rajandream M.A."/>
            <person name="Rogers J."/>
            <person name="Rutter S."/>
            <person name="Seeger K."/>
            <person name="Skelton S."/>
            <person name="Squares S."/>
            <person name="Squares R."/>
            <person name="Sulston J.E."/>
            <person name="Taylor K."/>
            <person name="Whitehead S."/>
            <person name="Barrell B.G."/>
        </authorList>
    </citation>
    <scope>NUCLEOTIDE SEQUENCE [LARGE SCALE GENOMIC DNA]</scope>
    <source>
        <strain>ATCC 25618 / H37Rv</strain>
    </source>
</reference>
<reference key="2">
    <citation type="journal article" date="2011" name="Mol. Cell. Proteomics">
        <title>Proteogenomic analysis of Mycobacterium tuberculosis by high resolution mass spectrometry.</title>
        <authorList>
            <person name="Kelkar D.S."/>
            <person name="Kumar D."/>
            <person name="Kumar P."/>
            <person name="Balakrishnan L."/>
            <person name="Muthusamy B."/>
            <person name="Yadav A.K."/>
            <person name="Shrivastava P."/>
            <person name="Marimuthu A."/>
            <person name="Anand S."/>
            <person name="Sundaram H."/>
            <person name="Kingsbury R."/>
            <person name="Harsha H.C."/>
            <person name="Nair B."/>
            <person name="Prasad T.S."/>
            <person name="Chauhan D.S."/>
            <person name="Katoch K."/>
            <person name="Katoch V.M."/>
            <person name="Kumar P."/>
            <person name="Chaerkady R."/>
            <person name="Ramachandran S."/>
            <person name="Dash D."/>
            <person name="Pandey A."/>
        </authorList>
    </citation>
    <scope>IDENTIFICATION BY MASS SPECTROMETRY [LARGE SCALE ANALYSIS]</scope>
    <source>
        <strain>ATCC 25618 / H37Rv</strain>
    </source>
</reference>
<reference key="3">
    <citation type="journal article" date="2014" name="Acta Crystallogr. F Struct. Biol. Commun.">
        <title>Cloning, overexpression, purification and preliminary X-ray analysis of a feast/famine regulatory protein (Rv2779c) from Mycobacterium tuberculosis H37Rv.</title>
        <authorList>
            <person name="Dey A."/>
            <person name="Ramachandran R."/>
        </authorList>
    </citation>
    <scope>SUBUNIT</scope>
    <scope>CRYSTALLIZATION</scope>
    <source>
        <strain>H37Rv</strain>
    </source>
</reference>
<reference key="4">
    <citation type="journal article" date="2015" name="J. Bacteriol.">
        <title>Regulation Mechanism of the ald Gene Encoding Alanine Dehydrogenase in Mycobacterium smegmatis and Mycobacterium tuberculosis by the Lrp/AsnC Family Regulator AldR.</title>
        <authorList>
            <person name="Jeong J.A."/>
            <person name="Hyun J."/>
            <person name="Oh J.I."/>
        </authorList>
    </citation>
    <scope>FUNCTION</scope>
    <scope>DNA-BINDING</scope>
</reference>
<reference evidence="10" key="5">
    <citation type="journal article" date="2016" name="J. Biol. Chem.">
        <title>Crystal structure of Mycobacterium tuberculosis H37Rv AldR (Rv2779c), a regulator of the ald gene: DNA binding and identification of small molecule inhibitors.</title>
        <authorList>
            <person name="Dey A."/>
            <person name="Shree S."/>
            <person name="Pandey S.K."/>
            <person name="Tripathi R.P."/>
            <person name="Ramachandran R."/>
        </authorList>
    </citation>
    <scope>X-RAY CRYSTALLOGRAPHY (2.95 ANGSTROMS)</scope>
    <scope>FUNCTION</scope>
    <scope>ACTIVITY REGULATION</scope>
    <scope>SUBUNIT</scope>
    <scope>DOMAIN</scope>
    <scope>MUTAGENESIS OF GLY-131</scope>
    <source>
        <strain>H37Rv</strain>
    </source>
</reference>
<gene>
    <name evidence="6" type="primary">aldR</name>
    <name evidence="9" type="ordered locus">Rv2779c</name>
</gene>
<keyword id="KW-0002">3D-structure</keyword>
<keyword id="KW-0010">Activator</keyword>
<keyword id="KW-0238">DNA-binding</keyword>
<keyword id="KW-1185">Reference proteome</keyword>
<keyword id="KW-0678">Repressor</keyword>
<keyword id="KW-0804">Transcription</keyword>
<keyword id="KW-0805">Transcription regulation</keyword>